<gene>
    <name evidence="1" type="primary">rplC</name>
    <name type="ordered locus">UUR10_0226</name>
</gene>
<organism>
    <name type="scientific">Ureaplasma urealyticum serovar 10 (strain ATCC 33699 / Western)</name>
    <dbReference type="NCBI Taxonomy" id="565575"/>
    <lineage>
        <taxon>Bacteria</taxon>
        <taxon>Bacillati</taxon>
        <taxon>Mycoplasmatota</taxon>
        <taxon>Mycoplasmoidales</taxon>
        <taxon>Mycoplasmoidaceae</taxon>
        <taxon>Ureaplasma</taxon>
    </lineage>
</organism>
<comment type="function">
    <text evidence="1">One of the primary rRNA binding proteins, it binds directly near the 3'-end of the 23S rRNA, where it nucleates assembly of the 50S subunit.</text>
</comment>
<comment type="subunit">
    <text evidence="1">Part of the 50S ribosomal subunit. Forms a cluster with proteins L14 and L19.</text>
</comment>
<comment type="similarity">
    <text evidence="1">Belongs to the universal ribosomal protein uL3 family.</text>
</comment>
<evidence type="ECO:0000255" key="1">
    <source>
        <dbReference type="HAMAP-Rule" id="MF_01325"/>
    </source>
</evidence>
<evidence type="ECO:0000305" key="2"/>
<proteinExistence type="inferred from homology"/>
<dbReference type="EMBL" id="CP001184">
    <property type="protein sequence ID" value="ACI59722.1"/>
    <property type="molecule type" value="Genomic_DNA"/>
</dbReference>
<dbReference type="RefSeq" id="WP_004025649.1">
    <property type="nucleotide sequence ID" value="NC_011374.1"/>
</dbReference>
<dbReference type="SMR" id="B5ZB40"/>
<dbReference type="STRING" id="565575.UUR10_0226"/>
<dbReference type="GeneID" id="93848706"/>
<dbReference type="KEGG" id="uue:UUR10_0226"/>
<dbReference type="eggNOG" id="COG0087">
    <property type="taxonomic scope" value="Bacteria"/>
</dbReference>
<dbReference type="HOGENOM" id="CLU_044142_4_0_14"/>
<dbReference type="OrthoDB" id="9806135at2"/>
<dbReference type="Proteomes" id="UP000002018">
    <property type="component" value="Chromosome"/>
</dbReference>
<dbReference type="GO" id="GO:0022625">
    <property type="term" value="C:cytosolic large ribosomal subunit"/>
    <property type="evidence" value="ECO:0007669"/>
    <property type="project" value="TreeGrafter"/>
</dbReference>
<dbReference type="GO" id="GO:0019843">
    <property type="term" value="F:rRNA binding"/>
    <property type="evidence" value="ECO:0007669"/>
    <property type="project" value="UniProtKB-UniRule"/>
</dbReference>
<dbReference type="GO" id="GO:0003735">
    <property type="term" value="F:structural constituent of ribosome"/>
    <property type="evidence" value="ECO:0007669"/>
    <property type="project" value="InterPro"/>
</dbReference>
<dbReference type="GO" id="GO:0006412">
    <property type="term" value="P:translation"/>
    <property type="evidence" value="ECO:0007669"/>
    <property type="project" value="UniProtKB-UniRule"/>
</dbReference>
<dbReference type="FunFam" id="2.40.30.10:FF:000004">
    <property type="entry name" value="50S ribosomal protein L3"/>
    <property type="match status" value="1"/>
</dbReference>
<dbReference type="FunFam" id="3.30.160.810:FF:000001">
    <property type="entry name" value="50S ribosomal protein L3"/>
    <property type="match status" value="1"/>
</dbReference>
<dbReference type="Gene3D" id="3.30.160.810">
    <property type="match status" value="1"/>
</dbReference>
<dbReference type="Gene3D" id="2.40.30.10">
    <property type="entry name" value="Translation factors"/>
    <property type="match status" value="1"/>
</dbReference>
<dbReference type="HAMAP" id="MF_01325_B">
    <property type="entry name" value="Ribosomal_uL3_B"/>
    <property type="match status" value="1"/>
</dbReference>
<dbReference type="InterPro" id="IPR000597">
    <property type="entry name" value="Ribosomal_uL3"/>
</dbReference>
<dbReference type="InterPro" id="IPR019927">
    <property type="entry name" value="Ribosomal_uL3_bac/org-type"/>
</dbReference>
<dbReference type="InterPro" id="IPR019926">
    <property type="entry name" value="Ribosomal_uL3_CS"/>
</dbReference>
<dbReference type="InterPro" id="IPR009000">
    <property type="entry name" value="Transl_B-barrel_sf"/>
</dbReference>
<dbReference type="NCBIfam" id="TIGR03625">
    <property type="entry name" value="L3_bact"/>
    <property type="match status" value="1"/>
</dbReference>
<dbReference type="PANTHER" id="PTHR11229">
    <property type="entry name" value="50S RIBOSOMAL PROTEIN L3"/>
    <property type="match status" value="1"/>
</dbReference>
<dbReference type="PANTHER" id="PTHR11229:SF16">
    <property type="entry name" value="LARGE RIBOSOMAL SUBUNIT PROTEIN UL3C"/>
    <property type="match status" value="1"/>
</dbReference>
<dbReference type="Pfam" id="PF00297">
    <property type="entry name" value="Ribosomal_L3"/>
    <property type="match status" value="1"/>
</dbReference>
<dbReference type="SUPFAM" id="SSF50447">
    <property type="entry name" value="Translation proteins"/>
    <property type="match status" value="1"/>
</dbReference>
<dbReference type="PROSITE" id="PS00474">
    <property type="entry name" value="RIBOSOMAL_L3"/>
    <property type="match status" value="1"/>
</dbReference>
<sequence length="233" mass="25020">MKSLLGTKVGMTQVFTETGKAVAATVIYVEPNKVLAVKTNEKDGYNAIQIGYETVKEKALNKPLLGQFKKANSDPKRHIKEFRDVVAEVGAELTVSEFEPGQLVNAQAYTKGHGFTGSIKRHNFSMGPMGHGAGYPHRYVGSIAKGRGGSQAQRVFKGTKLPGHYGHELVTTKNLLVLDVKANENLILIKGAIPGPKGSIVLLKSAKKVGHIVSDPQVVNYLANKASSSEANK</sequence>
<accession>B5ZB40</accession>
<keyword id="KW-0687">Ribonucleoprotein</keyword>
<keyword id="KW-0689">Ribosomal protein</keyword>
<keyword id="KW-0694">RNA-binding</keyword>
<keyword id="KW-0699">rRNA-binding</keyword>
<reference key="1">
    <citation type="submission" date="2008-10" db="EMBL/GenBank/DDBJ databases">
        <title>Genome sequence of Ureaplasma urealyticum serovar 10 ATCC-33699.</title>
        <authorList>
            <person name="Shrivastava S."/>
            <person name="Methe B.A."/>
            <person name="Glass J."/>
            <person name="White K."/>
            <person name="Duffy L.B."/>
        </authorList>
    </citation>
    <scope>NUCLEOTIDE SEQUENCE [LARGE SCALE GENOMIC DNA]</scope>
    <source>
        <strain>ATCC 33699 / Western</strain>
    </source>
</reference>
<name>RL3_UREU1</name>
<protein>
    <recommendedName>
        <fullName evidence="1">Large ribosomal subunit protein uL3</fullName>
    </recommendedName>
    <alternativeName>
        <fullName evidence="2">50S ribosomal protein L3</fullName>
    </alternativeName>
</protein>
<feature type="chain" id="PRO_1000141939" description="Large ribosomal subunit protein uL3">
    <location>
        <begin position="1"/>
        <end position="233"/>
    </location>
</feature>